<keyword id="KW-0067">ATP-binding</keyword>
<keyword id="KW-0436">Ligase</keyword>
<keyword id="KW-0460">Magnesium</keyword>
<keyword id="KW-0479">Metal-binding</keyword>
<keyword id="KW-0547">Nucleotide-binding</keyword>
<keyword id="KW-1185">Reference proteome</keyword>
<proteinExistence type="inferred from homology"/>
<feature type="chain" id="PRO_0000169402" description="Putative acid--amine ligase YgiC">
    <location>
        <begin position="1"/>
        <end position="386"/>
    </location>
</feature>
<feature type="binding site" evidence="1">
    <location>
        <begin position="100"/>
        <end position="102"/>
    </location>
    <ligand>
        <name>ATP</name>
        <dbReference type="ChEBI" id="CHEBI:30616"/>
    </ligand>
</feature>
<feature type="binding site" evidence="1">
    <location>
        <position position="102"/>
    </location>
    <ligand>
        <name>Mg(2+)</name>
        <dbReference type="ChEBI" id="CHEBI:18420"/>
        <label>1</label>
    </ligand>
</feature>
<feature type="binding site" evidence="1">
    <location>
        <position position="115"/>
    </location>
    <ligand>
        <name>Mg(2+)</name>
        <dbReference type="ChEBI" id="CHEBI:18420"/>
        <label>1</label>
    </ligand>
</feature>
<feature type="binding site" evidence="1">
    <location>
        <position position="115"/>
    </location>
    <ligand>
        <name>Mg(2+)</name>
        <dbReference type="ChEBI" id="CHEBI:18420"/>
        <label>2</label>
    </ligand>
</feature>
<feature type="binding site" evidence="1">
    <location>
        <position position="117"/>
    </location>
    <ligand>
        <name>Mg(2+)</name>
        <dbReference type="ChEBI" id="CHEBI:18420"/>
        <label>2</label>
    </ligand>
</feature>
<feature type="binding site" evidence="1">
    <location>
        <position position="267"/>
    </location>
    <ligand>
        <name>ATP</name>
        <dbReference type="ChEBI" id="CHEBI:30616"/>
    </ligand>
</feature>
<feature type="binding site" evidence="1">
    <location>
        <position position="302"/>
    </location>
    <ligand>
        <name>ATP</name>
        <dbReference type="ChEBI" id="CHEBI:30616"/>
    </ligand>
</feature>
<feature type="binding site" evidence="1">
    <location>
        <position position="309"/>
    </location>
    <ligand>
        <name>ATP</name>
        <dbReference type="ChEBI" id="CHEBI:30616"/>
    </ligand>
</feature>
<feature type="binding site" evidence="1">
    <location>
        <position position="336"/>
    </location>
    <ligand>
        <name>ATP</name>
        <dbReference type="ChEBI" id="CHEBI:30616"/>
    </ligand>
</feature>
<feature type="binding site" evidence="1">
    <location>
        <begin position="371"/>
        <end position="373"/>
    </location>
    <ligand>
        <name>ATP</name>
        <dbReference type="ChEBI" id="CHEBI:30616"/>
    </ligand>
</feature>
<feature type="site" description="Transition state stabilizer" evidence="1">
    <location>
        <position position="100"/>
    </location>
</feature>
<organism>
    <name type="scientific">Escherichia coli O157:H7</name>
    <dbReference type="NCBI Taxonomy" id="83334"/>
    <lineage>
        <taxon>Bacteria</taxon>
        <taxon>Pseudomonadati</taxon>
        <taxon>Pseudomonadota</taxon>
        <taxon>Gammaproteobacteria</taxon>
        <taxon>Enterobacterales</taxon>
        <taxon>Enterobacteriaceae</taxon>
        <taxon>Escherichia</taxon>
    </lineage>
</organism>
<gene>
    <name type="primary">ygiC</name>
    <name type="ordered locus">Z4395</name>
    <name type="ordered locus">ECs3926</name>
</gene>
<evidence type="ECO:0000250" key="1"/>
<evidence type="ECO:0000305" key="2"/>
<comment type="function">
    <text evidence="1">May be a ligase forming an amide bond. Shows ATPase activity (By similarity).</text>
</comment>
<comment type="similarity">
    <text evidence="2">Belongs to the glutathionylspermidine synthase preATP-grasp family.</text>
</comment>
<sequence length="386" mass="45026">MERVSITERPDWREKAHEYGFNFHTMYGEPYWCEDAYYKLTLAQVEKLEEVTAELHQMCLKVVEKVIASDELMTKFRIPKHTWSFVRQSWLTHQPSLYSRLDLAWDGTGEPKLLENNADTPTSLYEAAFFQWIWLEDQLNAGNLPEGSDQFNSLQEKLIDRFVELREQYGFQLLHLTCCRDTVEDRGTIQYLQDCATEAEIATEFLYIDDIGLGEKGQFTDLQDQVISNLFKLYPWEFMLREMFSTKLEDAGVRWLEPAWKSIISNKALLPLLWEMFPNHPNLLPAYFAEDDHPQMEKYVVKPIFSREGANVSIIENGKTIEAAEGPYGEEGMIVQQFHPLPKFGDSYMLIGSWLVNDQPAGIGIREDRALITQDMSRFYPHIFVE</sequence>
<reference key="1">
    <citation type="journal article" date="2001" name="Nature">
        <title>Genome sequence of enterohaemorrhagic Escherichia coli O157:H7.</title>
        <authorList>
            <person name="Perna N.T."/>
            <person name="Plunkett G. III"/>
            <person name="Burland V."/>
            <person name="Mau B."/>
            <person name="Glasner J.D."/>
            <person name="Rose D.J."/>
            <person name="Mayhew G.F."/>
            <person name="Evans P.S."/>
            <person name="Gregor J."/>
            <person name="Kirkpatrick H.A."/>
            <person name="Posfai G."/>
            <person name="Hackett J."/>
            <person name="Klink S."/>
            <person name="Boutin A."/>
            <person name="Shao Y."/>
            <person name="Miller L."/>
            <person name="Grotbeck E.J."/>
            <person name="Davis N.W."/>
            <person name="Lim A."/>
            <person name="Dimalanta E.T."/>
            <person name="Potamousis K."/>
            <person name="Apodaca J."/>
            <person name="Anantharaman T.S."/>
            <person name="Lin J."/>
            <person name="Yen G."/>
            <person name="Schwartz D.C."/>
            <person name="Welch R.A."/>
            <person name="Blattner F.R."/>
        </authorList>
    </citation>
    <scope>NUCLEOTIDE SEQUENCE [LARGE SCALE GENOMIC DNA]</scope>
    <source>
        <strain>O157:H7 / EDL933 / ATCC 700927 / EHEC</strain>
    </source>
</reference>
<reference key="2">
    <citation type="journal article" date="2001" name="DNA Res.">
        <title>Complete genome sequence of enterohemorrhagic Escherichia coli O157:H7 and genomic comparison with a laboratory strain K-12.</title>
        <authorList>
            <person name="Hayashi T."/>
            <person name="Makino K."/>
            <person name="Ohnishi M."/>
            <person name="Kurokawa K."/>
            <person name="Ishii K."/>
            <person name="Yokoyama K."/>
            <person name="Han C.-G."/>
            <person name="Ohtsubo E."/>
            <person name="Nakayama K."/>
            <person name="Murata T."/>
            <person name="Tanaka M."/>
            <person name="Tobe T."/>
            <person name="Iida T."/>
            <person name="Takami H."/>
            <person name="Honda T."/>
            <person name="Sasakawa C."/>
            <person name="Ogasawara N."/>
            <person name="Yasunaga T."/>
            <person name="Kuhara S."/>
            <person name="Shiba T."/>
            <person name="Hattori M."/>
            <person name="Shinagawa H."/>
        </authorList>
    </citation>
    <scope>NUCLEOTIDE SEQUENCE [LARGE SCALE GENOMIC DNA]</scope>
    <source>
        <strain>O157:H7 / Sakai / RIMD 0509952 / EHEC</strain>
    </source>
</reference>
<protein>
    <recommendedName>
        <fullName>Putative acid--amine ligase YgiC</fullName>
        <ecNumber>6.3.1.-</ecNumber>
    </recommendedName>
</protein>
<accession>P0ADT7</accession>
<accession>P24196</accession>
<dbReference type="EC" id="6.3.1.-"/>
<dbReference type="EMBL" id="AE005174">
    <property type="protein sequence ID" value="AAG58177.1"/>
    <property type="molecule type" value="Genomic_DNA"/>
</dbReference>
<dbReference type="EMBL" id="BA000007">
    <property type="protein sequence ID" value="BAB37349.1"/>
    <property type="molecule type" value="Genomic_DNA"/>
</dbReference>
<dbReference type="PIR" id="E85964">
    <property type="entry name" value="E85964"/>
</dbReference>
<dbReference type="PIR" id="F91119">
    <property type="entry name" value="F91119"/>
</dbReference>
<dbReference type="RefSeq" id="NP_311953.1">
    <property type="nucleotide sequence ID" value="NC_002695.1"/>
</dbReference>
<dbReference type="RefSeq" id="WP_000442860.1">
    <property type="nucleotide sequence ID" value="NZ_SWKA01000005.1"/>
</dbReference>
<dbReference type="SMR" id="P0ADT7"/>
<dbReference type="STRING" id="155864.Z4395"/>
<dbReference type="GeneID" id="916245"/>
<dbReference type="KEGG" id="ece:Z4395"/>
<dbReference type="KEGG" id="ecs:ECs_3926"/>
<dbReference type="PATRIC" id="fig|386585.9.peg.4094"/>
<dbReference type="eggNOG" id="COG0754">
    <property type="taxonomic scope" value="Bacteria"/>
</dbReference>
<dbReference type="HOGENOM" id="CLU_059175_0_0_6"/>
<dbReference type="OMA" id="CFKLYPW"/>
<dbReference type="Proteomes" id="UP000000558">
    <property type="component" value="Chromosome"/>
</dbReference>
<dbReference type="Proteomes" id="UP000002519">
    <property type="component" value="Chromosome"/>
</dbReference>
<dbReference type="GO" id="GO:0005524">
    <property type="term" value="F:ATP binding"/>
    <property type="evidence" value="ECO:0007669"/>
    <property type="project" value="UniProtKB-KW"/>
</dbReference>
<dbReference type="GO" id="GO:0016874">
    <property type="term" value="F:ligase activity"/>
    <property type="evidence" value="ECO:0007669"/>
    <property type="project" value="UniProtKB-KW"/>
</dbReference>
<dbReference type="GO" id="GO:0046872">
    <property type="term" value="F:metal ion binding"/>
    <property type="evidence" value="ECO:0007669"/>
    <property type="project" value="UniProtKB-KW"/>
</dbReference>
<dbReference type="Gene3D" id="3.30.1490.330">
    <property type="match status" value="1"/>
</dbReference>
<dbReference type="InterPro" id="IPR005494">
    <property type="entry name" value="GSPS_pre-ATP-grasp-like_dom"/>
</dbReference>
<dbReference type="InterPro" id="IPR016185">
    <property type="entry name" value="PreATP-grasp_dom_sf"/>
</dbReference>
<dbReference type="Pfam" id="PF03738">
    <property type="entry name" value="GSP_synth"/>
    <property type="match status" value="1"/>
</dbReference>
<dbReference type="SUPFAM" id="SSF56059">
    <property type="entry name" value="Glutathione synthetase ATP-binding domain-like"/>
    <property type="match status" value="1"/>
</dbReference>
<dbReference type="SUPFAM" id="SSF52440">
    <property type="entry name" value="PreATP-grasp domain"/>
    <property type="match status" value="1"/>
</dbReference>
<name>YGIC_ECO57</name>